<sequence length="89" mass="10198">MSLSTEATAKIVSEFGRDANDTGSTDVQVALLTAQINHLQGHFAEHKKDHHSRRGLLRMVSQRRKLLDYLKRKDVARYTALIERLGLRR</sequence>
<feature type="chain" id="PRO_1000143164" description="Small ribosomal subunit protein uS15">
    <location>
        <begin position="1"/>
        <end position="89"/>
    </location>
</feature>
<comment type="function">
    <text evidence="1">One of the primary rRNA binding proteins, it binds directly to 16S rRNA where it helps nucleate assembly of the platform of the 30S subunit by binding and bridging several RNA helices of the 16S rRNA.</text>
</comment>
<comment type="function">
    <text evidence="1">Forms an intersubunit bridge (bridge B4) with the 23S rRNA of the 50S subunit in the ribosome.</text>
</comment>
<comment type="subunit">
    <text evidence="1">Part of the 30S ribosomal subunit. Forms a bridge to the 50S subunit in the 70S ribosome, contacting the 23S rRNA.</text>
</comment>
<comment type="similarity">
    <text evidence="1">Belongs to the universal ribosomal protein uS15 family.</text>
</comment>
<accession>B5QZV5</accession>
<organism>
    <name type="scientific">Salmonella enteritidis PT4 (strain P125109)</name>
    <dbReference type="NCBI Taxonomy" id="550537"/>
    <lineage>
        <taxon>Bacteria</taxon>
        <taxon>Pseudomonadati</taxon>
        <taxon>Pseudomonadota</taxon>
        <taxon>Gammaproteobacteria</taxon>
        <taxon>Enterobacterales</taxon>
        <taxon>Enterobacteriaceae</taxon>
        <taxon>Salmonella</taxon>
    </lineage>
</organism>
<reference key="1">
    <citation type="journal article" date="2008" name="Genome Res.">
        <title>Comparative genome analysis of Salmonella enteritidis PT4 and Salmonella gallinarum 287/91 provides insights into evolutionary and host adaptation pathways.</title>
        <authorList>
            <person name="Thomson N.R."/>
            <person name="Clayton D.J."/>
            <person name="Windhorst D."/>
            <person name="Vernikos G."/>
            <person name="Davidson S."/>
            <person name="Churcher C."/>
            <person name="Quail M.A."/>
            <person name="Stevens M."/>
            <person name="Jones M.A."/>
            <person name="Watson M."/>
            <person name="Barron A."/>
            <person name="Layton A."/>
            <person name="Pickard D."/>
            <person name="Kingsley R.A."/>
            <person name="Bignell A."/>
            <person name="Clark L."/>
            <person name="Harris B."/>
            <person name="Ormond D."/>
            <person name="Abdellah Z."/>
            <person name="Brooks K."/>
            <person name="Cherevach I."/>
            <person name="Chillingworth T."/>
            <person name="Woodward J."/>
            <person name="Norberczak H."/>
            <person name="Lord A."/>
            <person name="Arrowsmith C."/>
            <person name="Jagels K."/>
            <person name="Moule S."/>
            <person name="Mungall K."/>
            <person name="Saunders M."/>
            <person name="Whitehead S."/>
            <person name="Chabalgoity J.A."/>
            <person name="Maskell D."/>
            <person name="Humphreys T."/>
            <person name="Roberts M."/>
            <person name="Barrow P.A."/>
            <person name="Dougan G."/>
            <person name="Parkhill J."/>
        </authorList>
    </citation>
    <scope>NUCLEOTIDE SEQUENCE [LARGE SCALE GENOMIC DNA]</scope>
    <source>
        <strain>P125109</strain>
    </source>
</reference>
<dbReference type="EMBL" id="AM933172">
    <property type="protein sequence ID" value="CAR34694.1"/>
    <property type="molecule type" value="Genomic_DNA"/>
</dbReference>
<dbReference type="RefSeq" id="WP_000059465.1">
    <property type="nucleotide sequence ID" value="NC_011294.1"/>
</dbReference>
<dbReference type="SMR" id="B5QZV5"/>
<dbReference type="GeneID" id="93035884"/>
<dbReference type="KEGG" id="set:SEN3118"/>
<dbReference type="HOGENOM" id="CLU_148518_0_0_6"/>
<dbReference type="Proteomes" id="UP000000613">
    <property type="component" value="Chromosome"/>
</dbReference>
<dbReference type="GO" id="GO:0022627">
    <property type="term" value="C:cytosolic small ribosomal subunit"/>
    <property type="evidence" value="ECO:0007669"/>
    <property type="project" value="TreeGrafter"/>
</dbReference>
<dbReference type="GO" id="GO:0019843">
    <property type="term" value="F:rRNA binding"/>
    <property type="evidence" value="ECO:0007669"/>
    <property type="project" value="UniProtKB-UniRule"/>
</dbReference>
<dbReference type="GO" id="GO:0003735">
    <property type="term" value="F:structural constituent of ribosome"/>
    <property type="evidence" value="ECO:0007669"/>
    <property type="project" value="InterPro"/>
</dbReference>
<dbReference type="GO" id="GO:0006412">
    <property type="term" value="P:translation"/>
    <property type="evidence" value="ECO:0007669"/>
    <property type="project" value="UniProtKB-UniRule"/>
</dbReference>
<dbReference type="CDD" id="cd00353">
    <property type="entry name" value="Ribosomal_S15p_S13e"/>
    <property type="match status" value="1"/>
</dbReference>
<dbReference type="FunFam" id="1.10.287.10:FF:000002">
    <property type="entry name" value="30S ribosomal protein S15"/>
    <property type="match status" value="1"/>
</dbReference>
<dbReference type="Gene3D" id="6.10.250.3130">
    <property type="match status" value="1"/>
</dbReference>
<dbReference type="Gene3D" id="1.10.287.10">
    <property type="entry name" value="S15/NS1, RNA-binding"/>
    <property type="match status" value="1"/>
</dbReference>
<dbReference type="HAMAP" id="MF_01343_B">
    <property type="entry name" value="Ribosomal_uS15_B"/>
    <property type="match status" value="1"/>
</dbReference>
<dbReference type="InterPro" id="IPR000589">
    <property type="entry name" value="Ribosomal_uS15"/>
</dbReference>
<dbReference type="InterPro" id="IPR005290">
    <property type="entry name" value="Ribosomal_uS15_bac-type"/>
</dbReference>
<dbReference type="InterPro" id="IPR009068">
    <property type="entry name" value="uS15_NS1_RNA-bd_sf"/>
</dbReference>
<dbReference type="NCBIfam" id="TIGR00952">
    <property type="entry name" value="S15_bact"/>
    <property type="match status" value="1"/>
</dbReference>
<dbReference type="PANTHER" id="PTHR23321">
    <property type="entry name" value="RIBOSOMAL PROTEIN S15, BACTERIAL AND ORGANELLAR"/>
    <property type="match status" value="1"/>
</dbReference>
<dbReference type="PANTHER" id="PTHR23321:SF26">
    <property type="entry name" value="SMALL RIBOSOMAL SUBUNIT PROTEIN US15M"/>
    <property type="match status" value="1"/>
</dbReference>
<dbReference type="Pfam" id="PF00312">
    <property type="entry name" value="Ribosomal_S15"/>
    <property type="match status" value="1"/>
</dbReference>
<dbReference type="SMART" id="SM01387">
    <property type="entry name" value="Ribosomal_S15"/>
    <property type="match status" value="1"/>
</dbReference>
<dbReference type="SUPFAM" id="SSF47060">
    <property type="entry name" value="S15/NS1 RNA-binding domain"/>
    <property type="match status" value="1"/>
</dbReference>
<dbReference type="PROSITE" id="PS00362">
    <property type="entry name" value="RIBOSOMAL_S15"/>
    <property type="match status" value="1"/>
</dbReference>
<keyword id="KW-0687">Ribonucleoprotein</keyword>
<keyword id="KW-0689">Ribosomal protein</keyword>
<keyword id="KW-0694">RNA-binding</keyword>
<keyword id="KW-0699">rRNA-binding</keyword>
<protein>
    <recommendedName>
        <fullName evidence="1">Small ribosomal subunit protein uS15</fullName>
    </recommendedName>
    <alternativeName>
        <fullName evidence="2">30S ribosomal protein S15</fullName>
    </alternativeName>
</protein>
<evidence type="ECO:0000255" key="1">
    <source>
        <dbReference type="HAMAP-Rule" id="MF_01343"/>
    </source>
</evidence>
<evidence type="ECO:0000305" key="2"/>
<gene>
    <name evidence="1" type="primary">rpsO</name>
    <name type="ordered locus">SEN3118</name>
</gene>
<proteinExistence type="inferred from homology"/>
<name>RS15_SALEP</name>